<keyword id="KW-0378">Hydrolase</keyword>
<keyword id="KW-0479">Metal-binding</keyword>
<keyword id="KW-0665">Pyrimidine biosynthesis</keyword>
<keyword id="KW-0862">Zinc</keyword>
<comment type="function">
    <text evidence="1">Catalyzes the reversible cyclization of carbamoyl aspartate to dihydroorotate.</text>
</comment>
<comment type="catalytic activity">
    <reaction evidence="1">
        <text>(S)-dihydroorotate + H2O = N-carbamoyl-L-aspartate + H(+)</text>
        <dbReference type="Rhea" id="RHEA:24296"/>
        <dbReference type="ChEBI" id="CHEBI:15377"/>
        <dbReference type="ChEBI" id="CHEBI:15378"/>
        <dbReference type="ChEBI" id="CHEBI:30864"/>
        <dbReference type="ChEBI" id="CHEBI:32814"/>
        <dbReference type="EC" id="3.5.2.3"/>
    </reaction>
</comment>
<comment type="cofactor">
    <cofactor evidence="1">
        <name>Zn(2+)</name>
        <dbReference type="ChEBI" id="CHEBI:29105"/>
    </cofactor>
    <text evidence="1">Binds 2 Zn(2+) ions per subunit.</text>
</comment>
<comment type="pathway">
    <text evidence="1">Pyrimidine metabolism; UMP biosynthesis via de novo pathway; (S)-dihydroorotate from bicarbonate: step 3/3.</text>
</comment>
<comment type="subunit">
    <text evidence="1">Homodimer.</text>
</comment>
<comment type="similarity">
    <text evidence="1">Belongs to the metallo-dependent hydrolases superfamily. DHOase family. Class II DHOase subfamily.</text>
</comment>
<accession>B0TRS6</accession>
<reference key="1">
    <citation type="submission" date="2008-01" db="EMBL/GenBank/DDBJ databases">
        <title>Complete sequence of Shewanella halifaxensis HAW-EB4.</title>
        <authorList>
            <consortium name="US DOE Joint Genome Institute"/>
            <person name="Copeland A."/>
            <person name="Lucas S."/>
            <person name="Lapidus A."/>
            <person name="Glavina del Rio T."/>
            <person name="Dalin E."/>
            <person name="Tice H."/>
            <person name="Bruce D."/>
            <person name="Goodwin L."/>
            <person name="Pitluck S."/>
            <person name="Sims D."/>
            <person name="Brettin T."/>
            <person name="Detter J.C."/>
            <person name="Han C."/>
            <person name="Kuske C.R."/>
            <person name="Schmutz J."/>
            <person name="Larimer F."/>
            <person name="Land M."/>
            <person name="Hauser L."/>
            <person name="Kyrpides N."/>
            <person name="Kim E."/>
            <person name="Zhao J.-S."/>
            <person name="Richardson P."/>
        </authorList>
    </citation>
    <scope>NUCLEOTIDE SEQUENCE [LARGE SCALE GENOMIC DNA]</scope>
    <source>
        <strain>HAW-EB4</strain>
    </source>
</reference>
<feature type="chain" id="PRO_1000078104" description="Dihydroorotase">
    <location>
        <begin position="1"/>
        <end position="345"/>
    </location>
</feature>
<feature type="active site" evidence="1">
    <location>
        <position position="246"/>
    </location>
</feature>
<feature type="binding site" evidence="1">
    <location>
        <position position="13"/>
    </location>
    <ligand>
        <name>Zn(2+)</name>
        <dbReference type="ChEBI" id="CHEBI:29105"/>
        <label>1</label>
    </ligand>
</feature>
<feature type="binding site" evidence="1">
    <location>
        <begin position="15"/>
        <end position="17"/>
    </location>
    <ligand>
        <name>substrate</name>
    </ligand>
</feature>
<feature type="binding site" evidence="1">
    <location>
        <position position="15"/>
    </location>
    <ligand>
        <name>Zn(2+)</name>
        <dbReference type="ChEBI" id="CHEBI:29105"/>
        <label>1</label>
    </ligand>
</feature>
<feature type="binding site" evidence="1">
    <location>
        <position position="41"/>
    </location>
    <ligand>
        <name>substrate</name>
    </ligand>
</feature>
<feature type="binding site" description="via carbamate group" evidence="1">
    <location>
        <position position="98"/>
    </location>
    <ligand>
        <name>Zn(2+)</name>
        <dbReference type="ChEBI" id="CHEBI:29105"/>
        <label>1</label>
    </ligand>
</feature>
<feature type="binding site" description="via carbamate group" evidence="1">
    <location>
        <position position="98"/>
    </location>
    <ligand>
        <name>Zn(2+)</name>
        <dbReference type="ChEBI" id="CHEBI:29105"/>
        <label>2</label>
    </ligand>
</feature>
<feature type="binding site" evidence="1">
    <location>
        <position position="135"/>
    </location>
    <ligand>
        <name>substrate</name>
    </ligand>
</feature>
<feature type="binding site" evidence="1">
    <location>
        <position position="135"/>
    </location>
    <ligand>
        <name>Zn(2+)</name>
        <dbReference type="ChEBI" id="CHEBI:29105"/>
        <label>2</label>
    </ligand>
</feature>
<feature type="binding site" evidence="1">
    <location>
        <position position="173"/>
    </location>
    <ligand>
        <name>Zn(2+)</name>
        <dbReference type="ChEBI" id="CHEBI:29105"/>
        <label>2</label>
    </ligand>
</feature>
<feature type="binding site" evidence="1">
    <location>
        <position position="218"/>
    </location>
    <ligand>
        <name>substrate</name>
    </ligand>
</feature>
<feature type="binding site" evidence="1">
    <location>
        <position position="246"/>
    </location>
    <ligand>
        <name>Zn(2+)</name>
        <dbReference type="ChEBI" id="CHEBI:29105"/>
        <label>1</label>
    </ligand>
</feature>
<feature type="binding site" evidence="1">
    <location>
        <position position="250"/>
    </location>
    <ligand>
        <name>substrate</name>
    </ligand>
</feature>
<feature type="binding site" evidence="1">
    <location>
        <position position="262"/>
    </location>
    <ligand>
        <name>substrate</name>
    </ligand>
</feature>
<feature type="modified residue" description="N6-carboxylysine" evidence="1">
    <location>
        <position position="98"/>
    </location>
</feature>
<proteinExistence type="inferred from homology"/>
<gene>
    <name evidence="1" type="primary">pyrC</name>
    <name type="ordered locus">Shal_3291</name>
</gene>
<organism>
    <name type="scientific">Shewanella halifaxensis (strain HAW-EB4)</name>
    <dbReference type="NCBI Taxonomy" id="458817"/>
    <lineage>
        <taxon>Bacteria</taxon>
        <taxon>Pseudomonadati</taxon>
        <taxon>Pseudomonadota</taxon>
        <taxon>Gammaproteobacteria</taxon>
        <taxon>Alteromonadales</taxon>
        <taxon>Shewanellaceae</taxon>
        <taxon>Shewanella</taxon>
    </lineage>
</organism>
<evidence type="ECO:0000255" key="1">
    <source>
        <dbReference type="HAMAP-Rule" id="MF_00219"/>
    </source>
</evidence>
<sequence length="345" mass="37868">MTQITLLTPDDWHLHFRDGDMLQETVPATARLFQRAIVMPNLLPPVTDAKMVTEYRERILAARPAGSTFEPLMTIFLTNNTTEQDIIDAKAAGVVAAKLYPAGATTNSDAAVKALDALFPVFEAMAKHGMLLLVHGEVTESHIDIFDREAMFIERYLARIVAAFPALKVVFEHITTKDAADFVMSAPDNVAATITPQHLLLNRNDLLVGGVRPHNFCLPVLKRSTHQEALRAVIATGSSKFFLGTDSAPHEKHRKESACGCAGCYSAWSALELYAQVFDDLGALDKLEGFASLHGPDFYGLPRNTSTVTLVKEKWTVPSEIILPNGNPIVPFFAGEEVNWKVKNA</sequence>
<name>PYRC_SHEHH</name>
<dbReference type="EC" id="3.5.2.3" evidence="1"/>
<dbReference type="EMBL" id="CP000931">
    <property type="protein sequence ID" value="ABZ77838.1"/>
    <property type="molecule type" value="Genomic_DNA"/>
</dbReference>
<dbReference type="RefSeq" id="WP_012278360.1">
    <property type="nucleotide sequence ID" value="NC_010334.1"/>
</dbReference>
<dbReference type="SMR" id="B0TRS6"/>
<dbReference type="STRING" id="458817.Shal_3291"/>
<dbReference type="KEGG" id="shl:Shal_3291"/>
<dbReference type="eggNOG" id="COG0418">
    <property type="taxonomic scope" value="Bacteria"/>
</dbReference>
<dbReference type="HOGENOM" id="CLU_041558_1_0_6"/>
<dbReference type="OrthoDB" id="9808095at2"/>
<dbReference type="UniPathway" id="UPA00070">
    <property type="reaction ID" value="UER00117"/>
</dbReference>
<dbReference type="Proteomes" id="UP000001317">
    <property type="component" value="Chromosome"/>
</dbReference>
<dbReference type="GO" id="GO:0005829">
    <property type="term" value="C:cytosol"/>
    <property type="evidence" value="ECO:0007669"/>
    <property type="project" value="TreeGrafter"/>
</dbReference>
<dbReference type="GO" id="GO:0004151">
    <property type="term" value="F:dihydroorotase activity"/>
    <property type="evidence" value="ECO:0007669"/>
    <property type="project" value="UniProtKB-UniRule"/>
</dbReference>
<dbReference type="GO" id="GO:0008270">
    <property type="term" value="F:zinc ion binding"/>
    <property type="evidence" value="ECO:0007669"/>
    <property type="project" value="UniProtKB-UniRule"/>
</dbReference>
<dbReference type="GO" id="GO:0006207">
    <property type="term" value="P:'de novo' pyrimidine nucleobase biosynthetic process"/>
    <property type="evidence" value="ECO:0007669"/>
    <property type="project" value="TreeGrafter"/>
</dbReference>
<dbReference type="GO" id="GO:0044205">
    <property type="term" value="P:'de novo' UMP biosynthetic process"/>
    <property type="evidence" value="ECO:0007669"/>
    <property type="project" value="UniProtKB-UniRule"/>
</dbReference>
<dbReference type="CDD" id="cd01294">
    <property type="entry name" value="DHOase"/>
    <property type="match status" value="1"/>
</dbReference>
<dbReference type="FunFam" id="3.20.20.140:FF:000006">
    <property type="entry name" value="Dihydroorotase"/>
    <property type="match status" value="1"/>
</dbReference>
<dbReference type="Gene3D" id="3.20.20.140">
    <property type="entry name" value="Metal-dependent hydrolases"/>
    <property type="match status" value="1"/>
</dbReference>
<dbReference type="HAMAP" id="MF_00219">
    <property type="entry name" value="PyrC_classII"/>
    <property type="match status" value="1"/>
</dbReference>
<dbReference type="InterPro" id="IPR006680">
    <property type="entry name" value="Amidohydro-rel"/>
</dbReference>
<dbReference type="InterPro" id="IPR004721">
    <property type="entry name" value="DHOdimr"/>
</dbReference>
<dbReference type="InterPro" id="IPR002195">
    <property type="entry name" value="Dihydroorotase_CS"/>
</dbReference>
<dbReference type="InterPro" id="IPR032466">
    <property type="entry name" value="Metal_Hydrolase"/>
</dbReference>
<dbReference type="NCBIfam" id="TIGR00856">
    <property type="entry name" value="pyrC_dimer"/>
    <property type="match status" value="1"/>
</dbReference>
<dbReference type="PANTHER" id="PTHR43137">
    <property type="entry name" value="DIHYDROOROTASE"/>
    <property type="match status" value="1"/>
</dbReference>
<dbReference type="PANTHER" id="PTHR43137:SF1">
    <property type="entry name" value="DIHYDROOROTASE"/>
    <property type="match status" value="1"/>
</dbReference>
<dbReference type="Pfam" id="PF01979">
    <property type="entry name" value="Amidohydro_1"/>
    <property type="match status" value="1"/>
</dbReference>
<dbReference type="PIRSF" id="PIRSF001237">
    <property type="entry name" value="DHOdimr"/>
    <property type="match status" value="1"/>
</dbReference>
<dbReference type="SUPFAM" id="SSF51556">
    <property type="entry name" value="Metallo-dependent hydrolases"/>
    <property type="match status" value="1"/>
</dbReference>
<dbReference type="PROSITE" id="PS00482">
    <property type="entry name" value="DIHYDROOROTASE_1"/>
    <property type="match status" value="1"/>
</dbReference>
<dbReference type="PROSITE" id="PS00483">
    <property type="entry name" value="DIHYDROOROTASE_2"/>
    <property type="match status" value="1"/>
</dbReference>
<protein>
    <recommendedName>
        <fullName evidence="1">Dihydroorotase</fullName>
        <shortName evidence="1">DHOase</shortName>
        <ecNumber evidence="1">3.5.2.3</ecNumber>
    </recommendedName>
</protein>